<comment type="function">
    <text>S1 is an NAD-dependent ADP-ribosyltransferase, which plays a crucial role in the pathogenesis of B.pertussis causing disruption of normal host cellular regulation. It catalyzes the ADP-ribosylation of a cysteine in the alpha subunit of host heterotrimeric G proteins. In the absence of G proteins it also catalyzes the cleavage of NAD(+) into ADP-ribose and nicotinamide. It irreversibly uncouples the G-alpha GTP-binding proteins from their membrane receptors.</text>
</comment>
<comment type="subunit">
    <text evidence="5">Pertussis toxin contains five different chains, S1-S5. They are organized into 2 functional subunits: A, composed of S1 (which is toxic) and B, containing S2, S3, S5, and two copies of S4 (B binds to the membrane receptors). Dimers of S2-S4 and S3-S4 are held together by S5.</text>
</comment>
<comment type="subcellular location">
    <subcellularLocation>
        <location evidence="2">Secreted</location>
    </subcellularLocation>
    <text>The individual chains are secreted by a sec-dependent mechanism into the periplasm. Then, S1 associates with the outer membrane before it joins with the B subunit to form the secretion-competent holotoxin. The type IV secretion system ptl mediates secretion of assembled toxin through the outer membrane.</text>
</comment>
<comment type="induction">
    <text>Activated by the two-component regulatory system BvgS/BvgA.</text>
</comment>
<comment type="domain">
    <text evidence="3">The region which spans amino acids 42-49 is required for enzymatic activity and contributes to the formation of a potentially important antigenic determinant.</text>
</comment>
<comment type="pharmaceutical">
    <text>Currently used in vaccines available under the names Daptacel (Sanofi Pasteur), Infanrix (GlaxoSmithKline), Pediarix (GlaxoSmithKline), TriHIBit (Sanofi Pasteur) and Tripedia (Sanofi Pasteur).</text>
</comment>
<comment type="miscellaneous">
    <text>Thiol:disulfide oxidoreductases DsbA and DsbB are required for periplasmic toxin assembly, whereas DbsC is important for extracellular toxin secretion.</text>
</comment>
<comment type="miscellaneous">
    <text>Experiments with temporal expression of PTX indicate that holotoxin secretion is at a rate of 3 molecules/min/cell. Also, more of toxin chains S1, S2 and S3 are produced than secreted; one half of each chain is incorporated into holotoxin.</text>
</comment>
<comment type="similarity">
    <text evidence="6">Belongs to the bacterial exotoxin subunit A family.</text>
</comment>
<keyword id="KW-0002">3D-structure</keyword>
<keyword id="KW-0903">Direct protein sequencing</keyword>
<keyword id="KW-1015">Disulfide bond</keyword>
<keyword id="KW-0328">Glycosyltransferase</keyword>
<keyword id="KW-0520">NAD</keyword>
<keyword id="KW-0548">Nucleotidyltransferase</keyword>
<keyword id="KW-0582">Pharmaceutical</keyword>
<keyword id="KW-1185">Reference proteome</keyword>
<keyword id="KW-0964">Secreted</keyword>
<keyword id="KW-0732">Signal</keyword>
<keyword id="KW-0800">Toxin</keyword>
<keyword id="KW-0808">Transferase</keyword>
<keyword id="KW-0843">Virulence</keyword>
<keyword id="KW-0855">Whooping cough</keyword>
<protein>
    <recommendedName>
        <fullName>Pertussis toxin subunit 1</fullName>
        <shortName>PTX S1</shortName>
    </recommendedName>
    <alternativeName>
        <fullName>Islet-activating protein S1</fullName>
        <shortName>IAP S1</shortName>
    </alternativeName>
    <alternativeName>
        <fullName>NAD-dependent ADP-ribosyltransferase</fullName>
        <ecNumber>2.4.2.-</ecNumber>
    </alternativeName>
</protein>
<evidence type="ECO:0000269" key="1">
    <source>
    </source>
</evidence>
<evidence type="ECO:0000269" key="2">
    <source>
    </source>
</evidence>
<evidence type="ECO:0000269" key="3">
    <source>
    </source>
</evidence>
<evidence type="ECO:0000269" key="4">
    <source>
    </source>
</evidence>
<evidence type="ECO:0000269" key="5">
    <source>
    </source>
</evidence>
<evidence type="ECO:0000305" key="6"/>
<evidence type="ECO:0007829" key="7">
    <source>
        <dbReference type="PDB" id="6RO0"/>
    </source>
</evidence>
<evidence type="ECO:0007829" key="8">
    <source>
        <dbReference type="PDB" id="7SNE"/>
    </source>
</evidence>
<proteinExistence type="evidence at protein level"/>
<dbReference type="EC" id="2.4.2.-"/>
<dbReference type="EMBL" id="M14378">
    <property type="protein sequence ID" value="AAA83980.1"/>
    <property type="molecule type" value="Genomic_DNA"/>
</dbReference>
<dbReference type="EMBL" id="M13223">
    <property type="protein sequence ID" value="AAA22981.1"/>
    <property type="molecule type" value="Genomic_DNA"/>
</dbReference>
<dbReference type="EMBL" id="X16347">
    <property type="protein sequence ID" value="CAA34397.1"/>
    <property type="molecule type" value="Genomic_DNA"/>
</dbReference>
<dbReference type="EMBL" id="AJ245366">
    <property type="protein sequence ID" value="CAB51472.1"/>
    <property type="molecule type" value="Genomic_DNA"/>
</dbReference>
<dbReference type="EMBL" id="AJ245367">
    <property type="protein sequence ID" value="CAB51542.1"/>
    <property type="molecule type" value="Genomic_DNA"/>
</dbReference>
<dbReference type="EMBL" id="AJ245368">
    <property type="protein sequence ID" value="CAB51543.1"/>
    <property type="molecule type" value="Genomic_DNA"/>
</dbReference>
<dbReference type="EMBL" id="AJ506996">
    <property type="protein sequence ID" value="CAD44970.1"/>
    <property type="molecule type" value="Genomic_DNA"/>
</dbReference>
<dbReference type="EMBL" id="AJ006151">
    <property type="protein sequence ID" value="CAA06893.1"/>
    <property type="molecule type" value="Genomic_DNA"/>
</dbReference>
<dbReference type="EMBL" id="AJ006153">
    <property type="protein sequence ID" value="CAA06895.1"/>
    <property type="molecule type" value="Genomic_DNA"/>
</dbReference>
<dbReference type="EMBL" id="AJ006155">
    <property type="protein sequence ID" value="CAA06897.1"/>
    <property type="molecule type" value="Genomic_DNA"/>
</dbReference>
<dbReference type="EMBL" id="AJ006157">
    <property type="protein sequence ID" value="CAA06899.1"/>
    <property type="molecule type" value="Genomic_DNA"/>
</dbReference>
<dbReference type="EMBL" id="AJ006159">
    <property type="protein sequence ID" value="CAA06901.1"/>
    <property type="molecule type" value="Genomic_DNA"/>
</dbReference>
<dbReference type="EMBL" id="AJ007363">
    <property type="protein sequence ID" value="CAA07478.1"/>
    <property type="molecule type" value="Genomic_DNA"/>
</dbReference>
<dbReference type="EMBL" id="AJ007364">
    <property type="protein sequence ID" value="CAA07479.1"/>
    <property type="molecule type" value="Genomic_DNA"/>
</dbReference>
<dbReference type="EMBL" id="AJ506994">
    <property type="protein sequence ID" value="CAD44968.1"/>
    <property type="molecule type" value="Genomic_DNA"/>
</dbReference>
<dbReference type="EMBL" id="AJ506995">
    <property type="protein sequence ID" value="CAD44969.1"/>
    <property type="molecule type" value="Genomic_DNA"/>
</dbReference>
<dbReference type="EMBL" id="AY879289">
    <property type="protein sequence ID" value="AAW72734.1"/>
    <property type="molecule type" value="Genomic_DNA"/>
</dbReference>
<dbReference type="EMBL" id="AJ920066">
    <property type="protein sequence ID" value="CAI72620.1"/>
    <property type="molecule type" value="Genomic_DNA"/>
</dbReference>
<dbReference type="EMBL" id="BX640422">
    <property type="protein sequence ID" value="CAE44038.1"/>
    <property type="molecule type" value="Genomic_DNA"/>
</dbReference>
<dbReference type="PIR" id="A24144">
    <property type="entry name" value="WEBR1P"/>
</dbReference>
<dbReference type="PIR" id="A24394">
    <property type="entry name" value="WEBR11"/>
</dbReference>
<dbReference type="RefSeq" id="NP_882282.1">
    <property type="nucleotide sequence ID" value="NC_002929.2"/>
</dbReference>
<dbReference type="RefSeq" id="WP_010931648.1">
    <property type="nucleotide sequence ID" value="NZ_CP039022.1"/>
</dbReference>
<dbReference type="PDB" id="1BCP">
    <property type="method" value="X-ray"/>
    <property type="resolution" value="2.70 A"/>
    <property type="chains" value="A/G=35-269"/>
</dbReference>
<dbReference type="PDB" id="1PRT">
    <property type="method" value="X-ray"/>
    <property type="resolution" value="2.90 A"/>
    <property type="chains" value="A/G=36-269"/>
</dbReference>
<dbReference type="PDB" id="1PTO">
    <property type="method" value="X-ray"/>
    <property type="resolution" value="3.50 A"/>
    <property type="chains" value="A/G=26-269"/>
</dbReference>
<dbReference type="PDB" id="6RO0">
    <property type="method" value="X-ray"/>
    <property type="resolution" value="2.13 A"/>
    <property type="chains" value="A/G=1-269"/>
</dbReference>
<dbReference type="PDB" id="7SKI">
    <property type="method" value="X-ray"/>
    <property type="resolution" value="1.10 A"/>
    <property type="chains" value="A/B=36-214"/>
</dbReference>
<dbReference type="PDB" id="7SKK">
    <property type="method" value="X-ray"/>
    <property type="resolution" value="1.65 A"/>
    <property type="chains" value="A/B/C/D=36-216"/>
</dbReference>
<dbReference type="PDB" id="7SKY">
    <property type="method" value="X-ray"/>
    <property type="resolution" value="1.37 A"/>
    <property type="chains" value="A/B/C/D=36-216"/>
</dbReference>
<dbReference type="PDB" id="7SNE">
    <property type="method" value="X-ray"/>
    <property type="resolution" value="1.00 A"/>
    <property type="chains" value="A/B/C/D=36-216"/>
</dbReference>
<dbReference type="PDB" id="7U6Z">
    <property type="method" value="X-ray"/>
    <property type="resolution" value="1.30 A"/>
    <property type="chains" value="A/B=36-216"/>
</dbReference>
<dbReference type="PDBsum" id="1BCP"/>
<dbReference type="PDBsum" id="1PRT"/>
<dbReference type="PDBsum" id="1PTO"/>
<dbReference type="PDBsum" id="6RO0"/>
<dbReference type="PDBsum" id="7SKI"/>
<dbReference type="PDBsum" id="7SKK"/>
<dbReference type="PDBsum" id="7SKY"/>
<dbReference type="PDBsum" id="7SNE"/>
<dbReference type="PDBsum" id="7U6Z"/>
<dbReference type="SMR" id="P04977"/>
<dbReference type="STRING" id="257313.BP3783"/>
<dbReference type="TCDB" id="1.C.72.1.1">
    <property type="family name" value="the pertussis toxin (ptx) family"/>
</dbReference>
<dbReference type="PaxDb" id="257313-BP3783"/>
<dbReference type="ABCD" id="P04977">
    <property type="antibodies" value="46 sequenced antibodies"/>
</dbReference>
<dbReference type="GeneID" id="69599992"/>
<dbReference type="KEGG" id="bpe:BP3783"/>
<dbReference type="PATRIC" id="fig|257313.5.peg.4087"/>
<dbReference type="eggNOG" id="ENOG50339NB">
    <property type="taxonomic scope" value="Bacteria"/>
</dbReference>
<dbReference type="HOGENOM" id="CLU_1081641_0_0_4"/>
<dbReference type="BRENDA" id="2.4.2.30">
    <property type="organism ID" value="899"/>
</dbReference>
<dbReference type="EvolutionaryTrace" id="P04977"/>
<dbReference type="Proteomes" id="UP000002676">
    <property type="component" value="Chromosome"/>
</dbReference>
<dbReference type="GO" id="GO:0005576">
    <property type="term" value="C:extracellular region"/>
    <property type="evidence" value="ECO:0007669"/>
    <property type="project" value="UniProtKB-SubCell"/>
</dbReference>
<dbReference type="GO" id="GO:0003950">
    <property type="term" value="F:NAD+ poly-ADP-ribosyltransferase activity"/>
    <property type="evidence" value="ECO:0007669"/>
    <property type="project" value="InterPro"/>
</dbReference>
<dbReference type="GO" id="GO:0016779">
    <property type="term" value="F:nucleotidyltransferase activity"/>
    <property type="evidence" value="ECO:0007669"/>
    <property type="project" value="UniProtKB-KW"/>
</dbReference>
<dbReference type="GO" id="GO:0090729">
    <property type="term" value="F:toxin activity"/>
    <property type="evidence" value="ECO:0007669"/>
    <property type="project" value="UniProtKB-KW"/>
</dbReference>
<dbReference type="GO" id="GO:0141104">
    <property type="term" value="P:symbiont-mediated activation of host G protein-coupled receptor signal transduction"/>
    <property type="evidence" value="ECO:0000269"/>
    <property type="project" value="SigSci"/>
</dbReference>
<dbReference type="Gene3D" id="3.90.210.10">
    <property type="entry name" value="Heat-Labile Enterotoxin, subunit A"/>
    <property type="match status" value="1"/>
</dbReference>
<dbReference type="InterPro" id="IPR003898">
    <property type="entry name" value="Borpert_toxA"/>
</dbReference>
<dbReference type="Pfam" id="PF02917">
    <property type="entry name" value="Pertussis_S1"/>
    <property type="match status" value="1"/>
</dbReference>
<dbReference type="PRINTS" id="PR01395">
    <property type="entry name" value="BORPETOXINA"/>
</dbReference>
<dbReference type="SUPFAM" id="SSF56399">
    <property type="entry name" value="ADP-ribosylation"/>
    <property type="match status" value="1"/>
</dbReference>
<reference key="1">
    <citation type="journal article" date="1986" name="Proc. Natl. Acad. Sci. U.S.A.">
        <title>Cloning and sequencing of the pertussis toxin genes: operon structure and gene duplication.</title>
        <authorList>
            <person name="Nicosia A."/>
            <person name="Perugini M."/>
            <person name="Franzini C."/>
            <person name="Casagli M.C."/>
            <person name="Borri M.G."/>
            <person name="Antoni G."/>
            <person name="Almoni M."/>
            <person name="Neri P."/>
            <person name="Ratti G."/>
            <person name="Rappuoli R."/>
        </authorList>
    </citation>
    <scope>NUCLEOTIDE SEQUENCE [GENOMIC DNA]</scope>
    <source>
        <strain>BP165</strain>
    </source>
</reference>
<reference key="2">
    <citation type="journal article" date="1986" name="Science">
        <title>Pertussis toxin gene: nucleotide sequence and genetic organization.</title>
        <authorList>
            <person name="Locht C."/>
            <person name="Keith J.M."/>
        </authorList>
    </citation>
    <scope>NUCLEOTIDE SEQUENCE [GENOMIC DNA]</scope>
    <source>
        <strain>3779</strain>
    </source>
</reference>
<reference key="3">
    <citation type="journal article" date="1989" name="Nucleic Acids Res.">
        <title>A unique sequence of the Bordetella pertussis toxin operon.</title>
        <authorList>
            <person name="Loosmore S.M."/>
            <person name="Cunningham J.D."/>
            <person name="Bradley W.R."/>
            <person name="Yao E.L."/>
            <person name="Dekaban G.A."/>
            <person name="Klein M.H."/>
        </authorList>
    </citation>
    <scope>NUCLEOTIDE SEQUENCE [GENOMIC DNA]</scope>
    <source>
        <strain>10536</strain>
    </source>
</reference>
<reference key="4">
    <citation type="journal article" date="1998" name="Infect. Immun.">
        <title>Polymorphism in the Bordetella pertussis virulence factors P.69/pertactin and pertussis toxin in The Netherlands: temporal trends and evidence for vaccine-driven evolution.</title>
        <authorList>
            <person name="Mooi F.R."/>
            <person name="van Oirschot H."/>
            <person name="Heuvelman K."/>
            <person name="van der Heide H.G."/>
            <person name="Gaastra W."/>
            <person name="Willems R.J."/>
        </authorList>
    </citation>
    <scope>NUCLEOTIDE SEQUENCE [GENOMIC DNA]</scope>
    <source>
        <strain>B572</strain>
        <strain>B592</strain>
        <strain>B6</strain>
    </source>
</reference>
<reference key="5">
    <citation type="journal article" date="1999" name="Vaccine">
        <title>Intranasal murine model of Bordetella pertussis infection: II. Sequence variation and protection induced by a tricomponent acellular vaccine.</title>
        <authorList>
            <person name="Boursaux-Eude C."/>
            <person name="Thiberge S."/>
            <person name="Carletti G."/>
            <person name="Guiso N."/>
        </authorList>
    </citation>
    <scope>NUCLEOTIDE SEQUENCE [GENOMIC DNA]</scope>
    <source>
        <strain>18323</strain>
        <strain>287</strain>
        <strain>Al1561</strain>
        <strain>CZ</strain>
        <strain>HAV</strain>
        <strain>Tohama I / ATCC BAA-589 / NCTC 13251</strain>
        <strain>Wellcome 28</strain>
    </source>
</reference>
<reference key="6">
    <citation type="journal article" date="2004" name="Epidemiol. Infect.">
        <title>Temporal trends in circulating Bordetella pertussis strains in Australia.</title>
        <authorList>
            <person name="Poynten M."/>
            <person name="McIntyre P.B."/>
            <person name="Mooi F.R."/>
            <person name="Heuvelman G.L."/>
            <person name="Gilbert G.L."/>
        </authorList>
    </citation>
    <scope>NUCLEOTIDE SEQUENCE [GENOMIC DNA]</scope>
    <source>
        <strain>CHANG</strain>
    </source>
</reference>
<reference key="7">
    <citation type="submission" date="2005-01" db="EMBL/GenBank/DDBJ databases">
        <authorList>
            <person name="Wang Y."/>
            <person name="Zhang S."/>
            <person name="Lei D."/>
        </authorList>
    </citation>
    <scope>NUCLEOTIDE SEQUENCE [GENOMIC DNA]</scope>
    <source>
        <strain>CS</strain>
    </source>
</reference>
<reference key="8">
    <citation type="submission" date="2005-03" db="EMBL/GenBank/DDBJ databases">
        <title>Bordetella pertussis toxin gene encoding subunit S1.</title>
        <authorList>
            <person name="Mallya A.D."/>
            <person name="Kumar M."/>
            <person name="Reddy M.N."/>
            <person name="Seshubabu B."/>
            <person name="Deobagkar D.D."/>
            <person name="Kapre S.V."/>
        </authorList>
    </citation>
    <scope>NUCLEOTIDE SEQUENCE [GENOMIC DNA]</scope>
    <source>
        <strain>134</strain>
    </source>
</reference>
<reference key="9">
    <citation type="journal article" date="2003" name="Nat. Genet.">
        <title>Comparative analysis of the genome sequences of Bordetella pertussis, Bordetella parapertussis and Bordetella bronchiseptica.</title>
        <authorList>
            <person name="Parkhill J."/>
            <person name="Sebaihia M."/>
            <person name="Preston A."/>
            <person name="Murphy L.D."/>
            <person name="Thomson N.R."/>
            <person name="Harris D.E."/>
            <person name="Holden M.T.G."/>
            <person name="Churcher C.M."/>
            <person name="Bentley S.D."/>
            <person name="Mungall K.L."/>
            <person name="Cerdeno-Tarraga A.-M."/>
            <person name="Temple L."/>
            <person name="James K.D."/>
            <person name="Harris B."/>
            <person name="Quail M.A."/>
            <person name="Achtman M."/>
            <person name="Atkin R."/>
            <person name="Baker S."/>
            <person name="Basham D."/>
            <person name="Bason N."/>
            <person name="Cherevach I."/>
            <person name="Chillingworth T."/>
            <person name="Collins M."/>
            <person name="Cronin A."/>
            <person name="Davis P."/>
            <person name="Doggett J."/>
            <person name="Feltwell T."/>
            <person name="Goble A."/>
            <person name="Hamlin N."/>
            <person name="Hauser H."/>
            <person name="Holroyd S."/>
            <person name="Jagels K."/>
            <person name="Leather S."/>
            <person name="Moule S."/>
            <person name="Norberczak H."/>
            <person name="O'Neil S."/>
            <person name="Ormond D."/>
            <person name="Price C."/>
            <person name="Rabbinowitsch E."/>
            <person name="Rutter S."/>
            <person name="Sanders M."/>
            <person name="Saunders D."/>
            <person name="Seeger K."/>
            <person name="Sharp S."/>
            <person name="Simmonds M."/>
            <person name="Skelton J."/>
            <person name="Squares R."/>
            <person name="Squares S."/>
            <person name="Stevens K."/>
            <person name="Unwin L."/>
            <person name="Whitehead S."/>
            <person name="Barrell B.G."/>
            <person name="Maskell D.J."/>
        </authorList>
    </citation>
    <scope>NUCLEOTIDE SEQUENCE [LARGE SCALE GENOMIC DNA]</scope>
    <source>
        <strain>Tohama I / ATCC BAA-589 / NCTC 13251</strain>
    </source>
</reference>
<reference key="10">
    <citation type="journal article" date="1988" name="Proc. Natl. Acad. Sci. U.S.A.">
        <title>Identification of a region in the S1 subunit of pertussis toxin that is required for enzymatic activity and that contributes to the formation of a neutralizing antigenic determinant.</title>
        <authorList>
            <person name="Cieplak W."/>
            <person name="Burnette W.N."/>
            <person name="Mar V.L."/>
            <person name="Kaljot K.T."/>
            <person name="Morris C.F."/>
            <person name="Chen K.K."/>
            <person name="Sato H."/>
            <person name="Keith J.M."/>
        </authorList>
    </citation>
    <scope>NUCLEOTIDE SEQUENCE [GENOMIC DNA] OF 35-64</scope>
    <scope>DOMAIN</scope>
</reference>
<reference key="11">
    <citation type="journal article" date="1989" name="FEBS Lett.">
        <title>Identification of an active-site residue in subunit S1 of pertussis toxin by photocrosslinking to NAD.</title>
        <authorList>
            <person name="Cockle S.A."/>
        </authorList>
    </citation>
    <scope>PROTEIN SEQUENCE OF 153-169</scope>
    <scope>ACTIVE SITE</scope>
    <source>
        <strain>10536</strain>
    </source>
</reference>
<reference key="12">
    <citation type="journal article" date="1989" name="J. Biol. Chem.">
        <title>Role of tryptophan 26 in the NAD glycohydrolase reaction of the S-1 subunit of pertussis toxin.</title>
        <authorList>
            <person name="Cortina G."/>
            <person name="Barbieri J.T."/>
        </authorList>
    </citation>
    <scope>ROLE OF TRP-60</scope>
</reference>
<reference key="13">
    <citation type="journal article" date="1991" name="Infect. Immun.">
        <title>Further analysis of the sequence of the S1 subunit of pertussis toxin.</title>
        <authorList>
            <person name="Pizza M."/>
            <person name="Bugnoli M."/>
            <person name="Puccini P."/>
            <person name="Siciliano R."/>
            <person name="Marino G."/>
            <person name="Rappuoli R."/>
        </authorList>
    </citation>
    <scope>CHARACTERIZATION</scope>
</reference>
<reference key="14">
    <citation type="journal article" date="1995" name="Biochimie">
        <title>A proposed mechanism of ADP-ribosylation catalyzed by the pertussis toxin S1 subunit.</title>
        <authorList>
            <person name="Locht C."/>
            <person name="Antoine R."/>
        </authorList>
    </citation>
    <scope>ACTIVE SITE</scope>
    <scope>CATALYTIC MECHANISM</scope>
    <scope>MUTAGENESIS OF CYS-75 AND GLU-163</scope>
</reference>
<reference key="15">
    <citation type="journal article" date="1995" name="J. Bacteriol.">
        <title>Synergistic binding of RNA polymerase and BvgA phosphate to the pertussis toxin promoter of Bordetella pertussis.</title>
        <authorList>
            <person name="Boucher P.E."/>
            <person name="Stibitz S."/>
        </authorList>
    </citation>
    <scope>REGULATION BY BVGA</scope>
    <source>
        <strain>Tohama I / ATCC BAA-589 / NCTC 13251</strain>
    </source>
</reference>
<reference key="16">
    <citation type="journal article" date="2000" name="Infect. Immun.">
        <title>Mutations in the S1 subunit of pertussis toxin that affect secretion.</title>
        <authorList>
            <person name="Craig-Mylius K.A."/>
            <person name="Stenson T.H."/>
            <person name="Weiss A.A."/>
        </authorList>
    </citation>
    <scope>MUTAGENESIS OF SER-88; SER-89; SER-90 AND ARG-91</scope>
    <source>
        <strain>Tohama I / BP338</strain>
    </source>
</reference>
<reference key="17">
    <citation type="journal article" date="2002" name="Infect. Immun.">
        <title>Membrane localization of the S1 subunit of pertussis toxin in Bordetella pertussis and implications for pertussis toxin secretion.</title>
        <authorList>
            <person name="Farizo K.M."/>
            <person name="Fiddner S."/>
            <person name="Cheung A.M."/>
            <person name="Burns D.L."/>
        </authorList>
    </citation>
    <scope>SUBCELLULAR LOCATION</scope>
    <scope>TOXIN ASSEMBLY AND SECRETION</scope>
    <scope>MUTAGENESIS OF PHE-269</scope>
    <source>
        <strain>Tohama I / ATCC BAA-589 / NCTC 13251</strain>
    </source>
</reference>
<reference key="18">
    <citation type="journal article" date="2002" name="Infect. Immun.">
        <title>DsbA and DsbC are required for secretion of pertussis toxin by Bordetella pertussis.</title>
        <authorList>
            <person name="Stenson T.H."/>
            <person name="Weiss A.A."/>
        </authorList>
    </citation>
    <scope>PERIPLASMIC TOXIN ASSEMBLY</scope>
    <source>
        <strain>Tohama I / BP338</strain>
    </source>
</reference>
<reference key="19">
    <citation type="journal article" date="2004" name="J. Bacteriol.">
        <title>Temporal expression of pertussis toxin and Ptl secretion proteins by Bordetella pertussis.</title>
        <authorList>
            <person name="Rambow-Larsen A.A."/>
            <person name="Weiss A.A."/>
        </authorList>
    </citation>
    <scope>TOXIN ASSEMBLY AND SECRETION</scope>
    <source>
        <strain>Tohama I / BP338</strain>
    </source>
</reference>
<reference key="20">
    <citation type="journal article" date="1994" name="Structure">
        <title>The crystal structure of pertussis toxin.</title>
        <authorList>
            <person name="Stein P.E."/>
            <person name="Boodhoo A."/>
            <person name="Armstrong G.D."/>
            <person name="Cockle S.A."/>
            <person name="Klein M.H."/>
            <person name="Read R.J."/>
        </authorList>
    </citation>
    <scope>X-RAY CRYSTALLOGRAPHY (2.9 ANGSTROMS)</scope>
    <source>
        <strain>10536</strain>
    </source>
</reference>
<reference key="21">
    <citation type="journal article" date="1996" name="J. Mol. Biol.">
        <title>Crystal structure of the pertussis toxin-ATP complex: a molecular sensor.</title>
        <authorList>
            <person name="Hazes B."/>
            <person name="Boodhoo A."/>
            <person name="Cockle S.A."/>
            <person name="Read R.J."/>
        </authorList>
    </citation>
    <scope>X-RAY CRYSTALLOGRAPHY (2.7 ANGSTROMS) IN COMPLEX WITH ATP</scope>
</reference>
<feature type="signal peptide">
    <location>
        <begin position="1"/>
        <end position="34"/>
    </location>
</feature>
<feature type="chain" id="PRO_0000019359" description="Pertussis toxin subunit 1">
    <location>
        <begin position="35"/>
        <end position="269"/>
    </location>
</feature>
<feature type="active site">
    <location>
        <position position="69"/>
    </location>
</feature>
<feature type="active site">
    <location>
        <position position="163"/>
    </location>
</feature>
<feature type="binding site">
    <location>
        <position position="60"/>
    </location>
    <ligand>
        <name>NAD(+)</name>
        <dbReference type="ChEBI" id="CHEBI:57540"/>
    </ligand>
</feature>
<feature type="disulfide bond">
    <location>
        <begin position="75"/>
        <end position="235"/>
    </location>
</feature>
<feature type="sequence variant" description="In strain: 10536, CZ, 18323 and B6.">
    <original>D</original>
    <variation>E</variation>
    <location>
        <position position="68"/>
    </location>
</feature>
<feature type="sequence variant" description="In strain: CS.">
    <original>N</original>
    <variation>S</variation>
    <location>
        <position position="129"/>
    </location>
</feature>
<feature type="sequence variant" description="In strain: CZ and 18323.">
    <original>S</original>
    <variation>P</variation>
    <location>
        <position position="196"/>
    </location>
</feature>
<feature type="sequence variant" description="In strain: 287, Al1561, B572, CHANG and HAV.">
    <original>M</original>
    <variation>I</variation>
    <location>
        <position position="228"/>
    </location>
</feature>
<feature type="sequence variant" description="In strain: CZ and 18323.">
    <original>I</original>
    <variation>M</variation>
    <location>
        <position position="232"/>
    </location>
</feature>
<feature type="sequence variant" description="In strain: 10536 and B6.">
    <original>I</original>
    <variation>V</variation>
    <location>
        <position position="232"/>
    </location>
</feature>
<feature type="mutagenesis site" description="38% of wild-type NAD-glycohydrolase activity." evidence="4">
    <original>C</original>
    <variation>G</variation>
    <location>
        <position position="75"/>
    </location>
</feature>
<feature type="mutagenesis site" description="33% of wild-type NAD-glycohydrolase activity." evidence="4">
    <original>C</original>
    <variation>S</variation>
    <location>
        <position position="75"/>
    </location>
</feature>
<feature type="mutagenesis site" description="More than 100-fold reduction of NAD-glycohydrolase activity." evidence="4">
    <location>
        <position position="75"/>
    </location>
</feature>
<feature type="mutagenesis site" description="No functional toxin produced although some mature size S1 protein accumulates in the periplasm." evidence="1">
    <original>S</original>
    <variation>G</variation>
    <location>
        <position position="88"/>
    </location>
</feature>
<feature type="mutagenesis site" description="Very low amount of final toxin secreted; approximately 50% of wild-type toxin level accumulate in the periplasm despite near wild-type levels of mature size S1 in the periplasm." evidence="1">
    <original>S</original>
    <variation>G</variation>
    <location>
        <position position="89"/>
    </location>
</feature>
<feature type="mutagenesis site" description="Very low amount of final toxin secreted; approximately 50% of wild-type toxin level accumulate in the periplasm despite near wild-type levels of mature size S1 in the periplasm." evidence="1">
    <original>S</original>
    <variation>G</variation>
    <location>
        <position position="90"/>
    </location>
</feature>
<feature type="mutagenesis site" description="Very low amounts of final toxin secreted; about 60% of wild-type toxin levels accumulate in the periplasm. Near wild-type levels of mature size S1 in the periplasm." evidence="1">
    <original>R</original>
    <variation>K</variation>
    <location>
        <position position="91"/>
    </location>
</feature>
<feature type="mutagenesis site" description="Reduction of several orders of magnitude of enzymatic activity." evidence="4">
    <original>E</original>
    <variation>D</variation>
    <location>
        <position position="163"/>
    </location>
</feature>
<feature type="mutagenesis site" description="Dramatic decrease in enzymatic activity." evidence="4">
    <location>
        <position position="163"/>
    </location>
</feature>
<feature type="mutagenesis site" description="Affects both protein stability and outer membrane targeting." evidence="2">
    <location>
        <position position="269"/>
    </location>
</feature>
<feature type="strand" evidence="8">
    <location>
        <begin position="39"/>
        <end position="47"/>
    </location>
</feature>
<feature type="helix" evidence="8">
    <location>
        <begin position="49"/>
        <end position="55"/>
    </location>
</feature>
<feature type="strand" evidence="8">
    <location>
        <begin position="60"/>
        <end position="63"/>
    </location>
</feature>
<feature type="helix" evidence="8">
    <location>
        <begin position="66"/>
        <end position="70"/>
    </location>
</feature>
<feature type="strand" evidence="8">
    <location>
        <begin position="73"/>
        <end position="75"/>
    </location>
</feature>
<feature type="turn" evidence="8">
    <location>
        <begin position="76"/>
        <end position="79"/>
    </location>
</feature>
<feature type="strand" evidence="8">
    <location>
        <begin position="82"/>
        <end position="89"/>
    </location>
</feature>
<feature type="helix" evidence="8">
    <location>
        <begin position="91"/>
        <end position="110"/>
    </location>
</feature>
<feature type="strand" evidence="8">
    <location>
        <begin position="118"/>
        <end position="126"/>
    </location>
</feature>
<feature type="strand" evidence="8">
    <location>
        <begin position="131"/>
        <end position="133"/>
    </location>
</feature>
<feature type="helix" evidence="8">
    <location>
        <begin position="134"/>
        <end position="145"/>
    </location>
</feature>
<feature type="turn" evidence="8">
    <location>
        <begin position="149"/>
        <end position="151"/>
    </location>
</feature>
<feature type="turn" evidence="8">
    <location>
        <begin position="156"/>
        <end position="162"/>
    </location>
</feature>
<feature type="strand" evidence="8">
    <location>
        <begin position="163"/>
        <end position="170"/>
    </location>
</feature>
<feature type="helix" evidence="8">
    <location>
        <begin position="172"/>
        <end position="174"/>
    </location>
</feature>
<feature type="strand" evidence="8">
    <location>
        <begin position="175"/>
        <end position="183"/>
    </location>
</feature>
<feature type="turn" evidence="8">
    <location>
        <begin position="185"/>
        <end position="187"/>
    </location>
</feature>
<feature type="strand" evidence="8">
    <location>
        <begin position="190"/>
        <end position="196"/>
    </location>
</feature>
<feature type="strand" evidence="8">
    <location>
        <begin position="208"/>
        <end position="210"/>
    </location>
</feature>
<feature type="strand" evidence="7">
    <location>
        <begin position="225"/>
        <end position="227"/>
    </location>
</feature>
<feature type="turn" evidence="7">
    <location>
        <begin position="228"/>
        <end position="231"/>
    </location>
</feature>
<feature type="helix" evidence="7">
    <location>
        <begin position="234"/>
        <end position="240"/>
    </location>
</feature>
<feature type="strand" evidence="7">
    <location>
        <begin position="259"/>
        <end position="261"/>
    </location>
</feature>
<feature type="helix" evidence="7">
    <location>
        <begin position="262"/>
        <end position="264"/>
    </location>
</feature>
<organism>
    <name type="scientific">Bordetella pertussis (strain Tohama I / ATCC BAA-589 / NCTC 13251)</name>
    <dbReference type="NCBI Taxonomy" id="257313"/>
    <lineage>
        <taxon>Bacteria</taxon>
        <taxon>Pseudomonadati</taxon>
        <taxon>Pseudomonadota</taxon>
        <taxon>Betaproteobacteria</taxon>
        <taxon>Burkholderiales</taxon>
        <taxon>Alcaligenaceae</taxon>
        <taxon>Bordetella</taxon>
    </lineage>
</organism>
<name>TOX1_BORPE</name>
<accession>P04977</accession>
<accession>O69258</accession>
<accession>O70057</accession>
<accession>Q599G4</accession>
<accession>Q5EIB9</accession>
<accession>Q93V22</accession>
<sequence length="269" mass="29974">MRCTRAIRQTARTGWLTWLAILAVTAPVTSPAWADDPPATVYRYDSRPPEDVFQNGFTAWGNNDNVLDHLTGRSCQVGSSNSAFVSTSSSRRYTEVYLEHRMQEAVEAERAGRGTGHFIGYIYEVRADNNFYGAASSYFEYVDTYGDNAGRILAGALATYQSEYLAHRRIPPENIRRVTRVYHNGITGETTTTEYSNARYVSQQTRANPNPYTSRRSVASIVGTLVRMAPVIGACMARQAESSEAMAAWSERAGEAMVLVYYESIAYSF</sequence>
<gene>
    <name type="primary">ptxA</name>
    <name type="ordered locus">BP3783</name>
</gene>